<name>ENTD_ECO57</name>
<protein>
    <recommendedName>
        <fullName evidence="2">Enterobactin synthase component D</fullName>
    </recommendedName>
    <alternativeName>
        <fullName evidence="2">4'-phosphopantetheinyl transferase EntD</fullName>
        <ecNumber evidence="2">2.7.8.-</ecNumber>
    </alternativeName>
    <alternativeName>
        <fullName evidence="2">Enterochelin synthase D</fullName>
    </alternativeName>
</protein>
<keyword id="KW-0259">Enterobactin biosynthesis</keyword>
<keyword id="KW-0460">Magnesium</keyword>
<keyword id="KW-0472">Membrane</keyword>
<keyword id="KW-0479">Metal-binding</keyword>
<keyword id="KW-1185">Reference proteome</keyword>
<keyword id="KW-0808">Transferase</keyword>
<proteinExistence type="inferred from homology"/>
<dbReference type="EC" id="2.7.8.-" evidence="2"/>
<dbReference type="EMBL" id="AE005174">
    <property type="protein sequence ID" value="AAG54917.1"/>
    <property type="status" value="ALT_INIT"/>
    <property type="molecule type" value="Genomic_DNA"/>
</dbReference>
<dbReference type="EMBL" id="BA000007">
    <property type="protein sequence ID" value="BAB34045.1"/>
    <property type="status" value="ALT_INIT"/>
    <property type="molecule type" value="Genomic_DNA"/>
</dbReference>
<dbReference type="PIR" id="A85557">
    <property type="entry name" value="A85557"/>
</dbReference>
<dbReference type="PIR" id="F90706">
    <property type="entry name" value="F90706"/>
</dbReference>
<dbReference type="RefSeq" id="NP_308649.2">
    <property type="nucleotide sequence ID" value="NC_002695.1"/>
</dbReference>
<dbReference type="RefSeq" id="WP_001506608.1">
    <property type="nucleotide sequence ID" value="NZ_VOAI01000012.1"/>
</dbReference>
<dbReference type="SMR" id="P0A3B9"/>
<dbReference type="STRING" id="155864.Z0723"/>
<dbReference type="GeneID" id="75170586"/>
<dbReference type="GeneID" id="916981"/>
<dbReference type="KEGG" id="ece:Z0723"/>
<dbReference type="KEGG" id="ecs:ECs_0622"/>
<dbReference type="PATRIC" id="fig|386585.9.peg.730"/>
<dbReference type="eggNOG" id="COG2977">
    <property type="taxonomic scope" value="Bacteria"/>
</dbReference>
<dbReference type="HOGENOM" id="CLU_075076_1_0_6"/>
<dbReference type="UniPathway" id="UPA00017"/>
<dbReference type="Proteomes" id="UP000000558">
    <property type="component" value="Chromosome"/>
</dbReference>
<dbReference type="Proteomes" id="UP000002519">
    <property type="component" value="Chromosome"/>
</dbReference>
<dbReference type="GO" id="GO:0009366">
    <property type="term" value="C:enterobactin synthetase complex"/>
    <property type="evidence" value="ECO:0000250"/>
    <property type="project" value="UniProtKB"/>
</dbReference>
<dbReference type="GO" id="GO:0005886">
    <property type="term" value="C:plasma membrane"/>
    <property type="evidence" value="ECO:0000250"/>
    <property type="project" value="UniProtKB"/>
</dbReference>
<dbReference type="GO" id="GO:0008897">
    <property type="term" value="F:holo-[acyl-carrier-protein] synthase activity"/>
    <property type="evidence" value="ECO:0000250"/>
    <property type="project" value="UniProtKB"/>
</dbReference>
<dbReference type="GO" id="GO:0000287">
    <property type="term" value="F:magnesium ion binding"/>
    <property type="evidence" value="ECO:0007669"/>
    <property type="project" value="InterPro"/>
</dbReference>
<dbReference type="GO" id="GO:0009239">
    <property type="term" value="P:enterobactin biosynthetic process"/>
    <property type="evidence" value="ECO:0000250"/>
    <property type="project" value="UniProtKB"/>
</dbReference>
<dbReference type="FunFam" id="3.90.470.20:FF:000012">
    <property type="entry name" value="Enterobactin synthase component D"/>
    <property type="match status" value="1"/>
</dbReference>
<dbReference type="Gene3D" id="3.90.470.20">
    <property type="entry name" value="4'-phosphopantetheinyl transferase domain"/>
    <property type="match status" value="1"/>
</dbReference>
<dbReference type="InterPro" id="IPR008278">
    <property type="entry name" value="4-PPantetheinyl_Trfase_dom"/>
</dbReference>
<dbReference type="InterPro" id="IPR037143">
    <property type="entry name" value="4-PPantetheinyl_Trfase_dom_sf"/>
</dbReference>
<dbReference type="InterPro" id="IPR041354">
    <property type="entry name" value="4PPT_N"/>
</dbReference>
<dbReference type="InterPro" id="IPR003542">
    <property type="entry name" value="Enbac_synth_compD-like"/>
</dbReference>
<dbReference type="NCBIfam" id="NF007604">
    <property type="entry name" value="PRK10251.1"/>
    <property type="match status" value="1"/>
</dbReference>
<dbReference type="PANTHER" id="PTHR38096">
    <property type="entry name" value="ENTEROBACTIN SYNTHASE COMPONENT D"/>
    <property type="match status" value="1"/>
</dbReference>
<dbReference type="PANTHER" id="PTHR38096:SF1">
    <property type="entry name" value="ENTEROBACTIN SYNTHASE COMPONENT D"/>
    <property type="match status" value="1"/>
</dbReference>
<dbReference type="Pfam" id="PF17837">
    <property type="entry name" value="4PPT_N"/>
    <property type="match status" value="1"/>
</dbReference>
<dbReference type="Pfam" id="PF01648">
    <property type="entry name" value="ACPS"/>
    <property type="match status" value="1"/>
</dbReference>
<dbReference type="PRINTS" id="PR01399">
    <property type="entry name" value="ENTSNTHTASED"/>
</dbReference>
<dbReference type="SUPFAM" id="SSF56214">
    <property type="entry name" value="4'-phosphopantetheinyl transferase"/>
    <property type="match status" value="1"/>
</dbReference>
<evidence type="ECO:0000250" key="1"/>
<evidence type="ECO:0000250" key="2">
    <source>
        <dbReference type="UniProtKB" id="P19925"/>
    </source>
</evidence>
<evidence type="ECO:0000250" key="3">
    <source>
        <dbReference type="UniProtKB" id="P24224"/>
    </source>
</evidence>
<evidence type="ECO:0000305" key="4"/>
<gene>
    <name evidence="2" type="primary">entD</name>
    <name type="ordered locus">Z0723</name>
    <name type="ordered locus">ECs0622</name>
</gene>
<accession>P0A3B9</accession>
<accession>Q54153</accession>
<accession>Q8XBW8</accession>
<comment type="function">
    <text evidence="2">Involved in the biosynthesis of the siderophore enterobactin (enterochelin), which is a macrocyclic trimeric lactone of N-(2,3-dihydroxybenzoyl)-serine. The serine trilactone serves as a scaffolding for the three catechol functionalities that provide hexadentate coordination for the tightly ligated iron(2+) atoms. Plays an essential role in the assembly of the enterobactin by catalyzing the transfer of the 4'-phosphopantetheine (Ppant) moiety from coenzyme A to the apo-domains of both EntB (ArCP domain) and EntF (PCP domain) to yield their holo-forms which make them competent for the activation of 2,3-dihydroxybenzoate (DHB) and L-serine, respectively.</text>
</comment>
<comment type="catalytic activity">
    <reaction evidence="2">
        <text>apo-[aryl-carrier protein] + CoA = holo-[aryl-carrier protein] + adenosine 3',5'-bisphosphate + H(+)</text>
        <dbReference type="Rhea" id="RHEA:48404"/>
        <dbReference type="Rhea" id="RHEA-COMP:15903"/>
        <dbReference type="Rhea" id="RHEA-COMP:17557"/>
        <dbReference type="ChEBI" id="CHEBI:15378"/>
        <dbReference type="ChEBI" id="CHEBI:29999"/>
        <dbReference type="ChEBI" id="CHEBI:57287"/>
        <dbReference type="ChEBI" id="CHEBI:58343"/>
        <dbReference type="ChEBI" id="CHEBI:64479"/>
    </reaction>
</comment>
<comment type="catalytic activity">
    <reaction evidence="2">
        <text>apo-[peptidyl-carrier protein] + CoA = holo-[peptidyl-carrier protein] + adenosine 3',5'-bisphosphate + H(+)</text>
        <dbReference type="Rhea" id="RHEA:46228"/>
        <dbReference type="Rhea" id="RHEA-COMP:11479"/>
        <dbReference type="Rhea" id="RHEA-COMP:11480"/>
        <dbReference type="ChEBI" id="CHEBI:15378"/>
        <dbReference type="ChEBI" id="CHEBI:29999"/>
        <dbReference type="ChEBI" id="CHEBI:57287"/>
        <dbReference type="ChEBI" id="CHEBI:58343"/>
        <dbReference type="ChEBI" id="CHEBI:64479"/>
    </reaction>
</comment>
<comment type="cofactor">
    <cofactor evidence="3">
        <name>Mg(2+)</name>
        <dbReference type="ChEBI" id="CHEBI:18420"/>
    </cofactor>
</comment>
<comment type="pathway">
    <text evidence="2">Siderophore biosynthesis; enterobactin biosynthesis.</text>
</comment>
<comment type="subunit">
    <text evidence="2">EntB, EntD, EntE, and EntF form a multienzyme complex called enterobactin synthase.</text>
</comment>
<comment type="subcellular location">
    <subcellularLocation>
        <location evidence="2">Membrane</location>
    </subcellularLocation>
</comment>
<comment type="similarity">
    <text evidence="2">Belongs to the P-Pant transferase superfamily. EntD family.</text>
</comment>
<comment type="sequence caution" evidence="4">
    <conflict type="erroneous initiation">
        <sequence resource="EMBL-CDS" id="AAG54917"/>
    </conflict>
    <text>Extended N-terminus.</text>
</comment>
<comment type="sequence caution" evidence="4">
    <conflict type="erroneous initiation">
        <sequence resource="EMBL-CDS" id="BAB34045"/>
    </conflict>
    <text>Extended N-terminus.</text>
</comment>
<reference key="1">
    <citation type="journal article" date="2001" name="Nature">
        <title>Genome sequence of enterohaemorrhagic Escherichia coli O157:H7.</title>
        <authorList>
            <person name="Perna N.T."/>
            <person name="Plunkett G. III"/>
            <person name="Burland V."/>
            <person name="Mau B."/>
            <person name="Glasner J.D."/>
            <person name="Rose D.J."/>
            <person name="Mayhew G.F."/>
            <person name="Evans P.S."/>
            <person name="Gregor J."/>
            <person name="Kirkpatrick H.A."/>
            <person name="Posfai G."/>
            <person name="Hackett J."/>
            <person name="Klink S."/>
            <person name="Boutin A."/>
            <person name="Shao Y."/>
            <person name="Miller L."/>
            <person name="Grotbeck E.J."/>
            <person name="Davis N.W."/>
            <person name="Lim A."/>
            <person name="Dimalanta E.T."/>
            <person name="Potamousis K."/>
            <person name="Apodaca J."/>
            <person name="Anantharaman T.S."/>
            <person name="Lin J."/>
            <person name="Yen G."/>
            <person name="Schwartz D.C."/>
            <person name="Welch R.A."/>
            <person name="Blattner F.R."/>
        </authorList>
    </citation>
    <scope>NUCLEOTIDE SEQUENCE [LARGE SCALE GENOMIC DNA]</scope>
    <source>
        <strain>O157:H7 / EDL933 / ATCC 700927 / EHEC</strain>
    </source>
</reference>
<reference key="2">
    <citation type="journal article" date="2001" name="DNA Res.">
        <title>Complete genome sequence of enterohemorrhagic Escherichia coli O157:H7 and genomic comparison with a laboratory strain K-12.</title>
        <authorList>
            <person name="Hayashi T."/>
            <person name="Makino K."/>
            <person name="Ohnishi M."/>
            <person name="Kurokawa K."/>
            <person name="Ishii K."/>
            <person name="Yokoyama K."/>
            <person name="Han C.-G."/>
            <person name="Ohtsubo E."/>
            <person name="Nakayama K."/>
            <person name="Murata T."/>
            <person name="Tanaka M."/>
            <person name="Tobe T."/>
            <person name="Iida T."/>
            <person name="Takami H."/>
            <person name="Honda T."/>
            <person name="Sasakawa C."/>
            <person name="Ogasawara N."/>
            <person name="Yasunaga T."/>
            <person name="Kuhara S."/>
            <person name="Shiba T."/>
            <person name="Hattori M."/>
            <person name="Shinagawa H."/>
        </authorList>
    </citation>
    <scope>NUCLEOTIDE SEQUENCE [LARGE SCALE GENOMIC DNA]</scope>
    <source>
        <strain>O157:H7 / Sakai / RIMD 0509952 / EHEC</strain>
    </source>
</reference>
<organism>
    <name type="scientific">Escherichia coli O157:H7</name>
    <dbReference type="NCBI Taxonomy" id="83334"/>
    <lineage>
        <taxon>Bacteria</taxon>
        <taxon>Pseudomonadati</taxon>
        <taxon>Pseudomonadota</taxon>
        <taxon>Gammaproteobacteria</taxon>
        <taxon>Enterobacterales</taxon>
        <taxon>Enterobacteriaceae</taxon>
        <taxon>Escherichia</taxon>
    </lineage>
</organism>
<sequence>MKTTHTSLPFAGHTLHFVEFDPANFCEQDLLWLPHYAQLQHAGRKRKTEHLAGRIAAVYALREYGYKCVPAIGELRQPVWPAEVYGSISHCGATALAVVSRQPIGVDIEEIFSAQTATELTDNIITPAEHERLADCGLAFSLALTLAFSAKESAFKASEIQTDAGFLDYQIISWNKQQVIIHRENEMFAVHWQIKEKIVITLCQHD</sequence>
<feature type="chain" id="PRO_0000206070" description="Enterobactin synthase component D">
    <location>
        <begin position="1"/>
        <end position="206"/>
    </location>
</feature>
<feature type="binding site" evidence="1">
    <location>
        <position position="107"/>
    </location>
    <ligand>
        <name>Mg(2+)</name>
        <dbReference type="ChEBI" id="CHEBI:18420"/>
    </ligand>
</feature>
<feature type="binding site" evidence="1">
    <location>
        <position position="109"/>
    </location>
    <ligand>
        <name>Mg(2+)</name>
        <dbReference type="ChEBI" id="CHEBI:18420"/>
    </ligand>
</feature>
<feature type="binding site" evidence="1">
    <location>
        <position position="152"/>
    </location>
    <ligand>
        <name>Mg(2+)</name>
        <dbReference type="ChEBI" id="CHEBI:18420"/>
    </ligand>
</feature>